<gene>
    <name evidence="1" type="primary">rpl13</name>
    <name type="ordered locus">MA_0596</name>
</gene>
<evidence type="ECO:0000255" key="1">
    <source>
        <dbReference type="HAMAP-Rule" id="MF_01366"/>
    </source>
</evidence>
<evidence type="ECO:0000305" key="2"/>
<feature type="chain" id="PRO_0000261840" description="Large ribosomal subunit protein uL13">
    <location>
        <begin position="1"/>
        <end position="143"/>
    </location>
</feature>
<keyword id="KW-1185">Reference proteome</keyword>
<keyword id="KW-0687">Ribonucleoprotein</keyword>
<keyword id="KW-0689">Ribosomal protein</keyword>
<comment type="function">
    <text evidence="1">This protein is one of the early assembly proteins of the 50S ribosomal subunit, although it is not seen to bind rRNA by itself. It is important during the early stages of 50S assembly.</text>
</comment>
<comment type="subunit">
    <text evidence="1">Part of the 50S ribosomal subunit.</text>
</comment>
<comment type="similarity">
    <text evidence="1">Belongs to the universal ribosomal protein uL13 family.</text>
</comment>
<protein>
    <recommendedName>
        <fullName evidence="1">Large ribosomal subunit protein uL13</fullName>
    </recommendedName>
    <alternativeName>
        <fullName evidence="2">50S ribosomal protein L13</fullName>
    </alternativeName>
</protein>
<dbReference type="EMBL" id="AE010299">
    <property type="protein sequence ID" value="AAM04040.1"/>
    <property type="molecule type" value="Genomic_DNA"/>
</dbReference>
<dbReference type="SMR" id="Q8TT43"/>
<dbReference type="FunCoup" id="Q8TT43">
    <property type="interactions" value="160"/>
</dbReference>
<dbReference type="STRING" id="188937.MA_0596"/>
<dbReference type="EnsemblBacteria" id="AAM04040">
    <property type="protein sequence ID" value="AAM04040"/>
    <property type="gene ID" value="MA_0596"/>
</dbReference>
<dbReference type="KEGG" id="mac:MA_0596"/>
<dbReference type="HOGENOM" id="CLU_076922_1_0_2"/>
<dbReference type="InParanoid" id="Q8TT43"/>
<dbReference type="PhylomeDB" id="Q8TT43"/>
<dbReference type="Proteomes" id="UP000002487">
    <property type="component" value="Chromosome"/>
</dbReference>
<dbReference type="GO" id="GO:0022625">
    <property type="term" value="C:cytosolic large ribosomal subunit"/>
    <property type="evidence" value="ECO:0000318"/>
    <property type="project" value="GO_Central"/>
</dbReference>
<dbReference type="GO" id="GO:0005840">
    <property type="term" value="C:ribosome"/>
    <property type="evidence" value="ECO:0000318"/>
    <property type="project" value="GO_Central"/>
</dbReference>
<dbReference type="GO" id="GO:0003729">
    <property type="term" value="F:mRNA binding"/>
    <property type="evidence" value="ECO:0000318"/>
    <property type="project" value="GO_Central"/>
</dbReference>
<dbReference type="GO" id="GO:0003735">
    <property type="term" value="F:structural constituent of ribosome"/>
    <property type="evidence" value="ECO:0000318"/>
    <property type="project" value="GO_Central"/>
</dbReference>
<dbReference type="GO" id="GO:0017148">
    <property type="term" value="P:negative regulation of translation"/>
    <property type="evidence" value="ECO:0000318"/>
    <property type="project" value="GO_Central"/>
</dbReference>
<dbReference type="GO" id="GO:0006412">
    <property type="term" value="P:translation"/>
    <property type="evidence" value="ECO:0007669"/>
    <property type="project" value="UniProtKB-UniRule"/>
</dbReference>
<dbReference type="CDD" id="cd00392">
    <property type="entry name" value="Ribosomal_L13"/>
    <property type="match status" value="1"/>
</dbReference>
<dbReference type="FunFam" id="3.90.1180.10:FF:000012">
    <property type="entry name" value="50S ribosomal protein L13"/>
    <property type="match status" value="1"/>
</dbReference>
<dbReference type="Gene3D" id="3.90.1180.10">
    <property type="entry name" value="Ribosomal protein L13"/>
    <property type="match status" value="1"/>
</dbReference>
<dbReference type="HAMAP" id="MF_01366">
    <property type="entry name" value="Ribosomal_uL13"/>
    <property type="match status" value="1"/>
</dbReference>
<dbReference type="InterPro" id="IPR005822">
    <property type="entry name" value="Ribosomal_uL13"/>
</dbReference>
<dbReference type="InterPro" id="IPR005823">
    <property type="entry name" value="Ribosomal_uL13_bac-type"/>
</dbReference>
<dbReference type="InterPro" id="IPR023563">
    <property type="entry name" value="Ribosomal_uL13_CS"/>
</dbReference>
<dbReference type="InterPro" id="IPR005755">
    <property type="entry name" value="Ribosomal_uL13_euk/arc"/>
</dbReference>
<dbReference type="InterPro" id="IPR036899">
    <property type="entry name" value="Ribosomal_uL13_sf"/>
</dbReference>
<dbReference type="NCBIfam" id="TIGR01077">
    <property type="entry name" value="L13_A_E"/>
    <property type="match status" value="1"/>
</dbReference>
<dbReference type="NCBIfam" id="NF005004">
    <property type="entry name" value="PRK06394.1"/>
    <property type="match status" value="1"/>
</dbReference>
<dbReference type="PANTHER" id="PTHR11545:SF3">
    <property type="entry name" value="LARGE RIBOSOMAL SUBUNIT PROTEIN UL13"/>
    <property type="match status" value="1"/>
</dbReference>
<dbReference type="PANTHER" id="PTHR11545">
    <property type="entry name" value="RIBOSOMAL PROTEIN L13"/>
    <property type="match status" value="1"/>
</dbReference>
<dbReference type="Pfam" id="PF00572">
    <property type="entry name" value="Ribosomal_L13"/>
    <property type="match status" value="1"/>
</dbReference>
<dbReference type="PIRSF" id="PIRSF002181">
    <property type="entry name" value="Ribosomal_L13"/>
    <property type="match status" value="1"/>
</dbReference>
<dbReference type="SUPFAM" id="SSF52161">
    <property type="entry name" value="Ribosomal protein L13"/>
    <property type="match status" value="1"/>
</dbReference>
<dbReference type="PROSITE" id="PS00783">
    <property type="entry name" value="RIBOSOMAL_L13"/>
    <property type="match status" value="1"/>
</dbReference>
<sequence length="143" mass="16059">MLKMTVIDAKGLILGRLASSVAKQLLSGDEKVYIINAEQAIISGSRAATLREYRETRERGATEFGPYFPKRPDRILKRTIRGMLPYKRARGRDAMSRLKVYVGVPYELKGAETVTIPDADMRLLSSSRYVELGEVSQKMGSKF</sequence>
<proteinExistence type="inferred from homology"/>
<name>RL13_METAC</name>
<accession>Q8TT43</accession>
<organism>
    <name type="scientific">Methanosarcina acetivorans (strain ATCC 35395 / DSM 2834 / JCM 12185 / C2A)</name>
    <dbReference type="NCBI Taxonomy" id="188937"/>
    <lineage>
        <taxon>Archaea</taxon>
        <taxon>Methanobacteriati</taxon>
        <taxon>Methanobacteriota</taxon>
        <taxon>Stenosarchaea group</taxon>
        <taxon>Methanomicrobia</taxon>
        <taxon>Methanosarcinales</taxon>
        <taxon>Methanosarcinaceae</taxon>
        <taxon>Methanosarcina</taxon>
    </lineage>
</organism>
<reference key="1">
    <citation type="journal article" date="2002" name="Genome Res.">
        <title>The genome of Methanosarcina acetivorans reveals extensive metabolic and physiological diversity.</title>
        <authorList>
            <person name="Galagan J.E."/>
            <person name="Nusbaum C."/>
            <person name="Roy A."/>
            <person name="Endrizzi M.G."/>
            <person name="Macdonald P."/>
            <person name="FitzHugh W."/>
            <person name="Calvo S."/>
            <person name="Engels R."/>
            <person name="Smirnov S."/>
            <person name="Atnoor D."/>
            <person name="Brown A."/>
            <person name="Allen N."/>
            <person name="Naylor J."/>
            <person name="Stange-Thomann N."/>
            <person name="DeArellano K."/>
            <person name="Johnson R."/>
            <person name="Linton L."/>
            <person name="McEwan P."/>
            <person name="McKernan K."/>
            <person name="Talamas J."/>
            <person name="Tirrell A."/>
            <person name="Ye W."/>
            <person name="Zimmer A."/>
            <person name="Barber R.D."/>
            <person name="Cann I."/>
            <person name="Graham D.E."/>
            <person name="Grahame D.A."/>
            <person name="Guss A.M."/>
            <person name="Hedderich R."/>
            <person name="Ingram-Smith C."/>
            <person name="Kuettner H.C."/>
            <person name="Krzycki J.A."/>
            <person name="Leigh J.A."/>
            <person name="Li W."/>
            <person name="Liu J."/>
            <person name="Mukhopadhyay B."/>
            <person name="Reeve J.N."/>
            <person name="Smith K."/>
            <person name="Springer T.A."/>
            <person name="Umayam L.A."/>
            <person name="White O."/>
            <person name="White R.H."/>
            <person name="de Macario E.C."/>
            <person name="Ferry J.G."/>
            <person name="Jarrell K.F."/>
            <person name="Jing H."/>
            <person name="Macario A.J.L."/>
            <person name="Paulsen I.T."/>
            <person name="Pritchett M."/>
            <person name="Sowers K.R."/>
            <person name="Swanson R.V."/>
            <person name="Zinder S.H."/>
            <person name="Lander E."/>
            <person name="Metcalf W.W."/>
            <person name="Birren B."/>
        </authorList>
    </citation>
    <scope>NUCLEOTIDE SEQUENCE [LARGE SCALE GENOMIC DNA]</scope>
    <source>
        <strain>ATCC 35395 / DSM 2834 / JCM 12185 / C2A</strain>
    </source>
</reference>